<accession>Q00598</accession>
<sequence>MAFVASVPVFANASGLKTEAKVCQKPALKNSFFRGEEVTSRSFFASQAVSAKPATTFEVDTTIRAQAVDAKKKGDIPLNLFRPANPYIGKCIYNERIVGEGAPGETKHIIFTHEGKVPYLEGQSIGIIPPGTDKDGKPHKLRLYSIASTRHGDFGDDKTVSLSVKRLEYTDANGNLVKGVCSNYLCDLKPGDEVMITGPVGTTMLMPEDQSATIIMLATGTGIAPFRSFLRRMFEETHADYKFNGLAWLFLGVPTSSTLLYREELEKMQKANPNNFRLDYAISREQTDSKGEKMYIQNRIAEYANEFWNMIQKPNTFVYMCGLRGMEDGIQQCMEDIAKANGTTWDAVVKGLKKEKRWHVETY</sequence>
<evidence type="ECO:0000250" key="1"/>
<evidence type="ECO:0000255" key="2">
    <source>
        <dbReference type="PROSITE-ProRule" id="PRU00716"/>
    </source>
</evidence>
<evidence type="ECO:0000269" key="3">
    <source>
    </source>
</evidence>
<evidence type="ECO:0000305" key="4"/>
<organism>
    <name type="scientific">Cyanophora paradoxa</name>
    <dbReference type="NCBI Taxonomy" id="2762"/>
    <lineage>
        <taxon>Eukaryota</taxon>
        <taxon>Glaucocystophyceae</taxon>
        <taxon>Cyanophoraceae</taxon>
        <taxon>Cyanophora</taxon>
    </lineage>
</organism>
<comment type="function">
    <text>May play a key role in regulating the relative amounts of cyclic and non-cyclic electron flow to meet the demands of the plant for ATP and reducing power.</text>
</comment>
<comment type="catalytic activity">
    <reaction>
        <text>2 reduced [2Fe-2S]-[ferredoxin] + NADP(+) + H(+) = 2 oxidized [2Fe-2S]-[ferredoxin] + NADPH</text>
        <dbReference type="Rhea" id="RHEA:20125"/>
        <dbReference type="Rhea" id="RHEA-COMP:10000"/>
        <dbReference type="Rhea" id="RHEA-COMP:10001"/>
        <dbReference type="ChEBI" id="CHEBI:15378"/>
        <dbReference type="ChEBI" id="CHEBI:33737"/>
        <dbReference type="ChEBI" id="CHEBI:33738"/>
        <dbReference type="ChEBI" id="CHEBI:57783"/>
        <dbReference type="ChEBI" id="CHEBI:58349"/>
        <dbReference type="EC" id="1.18.1.2"/>
    </reaction>
</comment>
<comment type="cofactor">
    <cofactor>
        <name>FAD</name>
        <dbReference type="ChEBI" id="CHEBI:57692"/>
    </cofactor>
</comment>
<comment type="subcellular location">
    <subcellularLocation>
        <location>Plastid</location>
        <location>Cyanelle stroma</location>
    </subcellularLocation>
    <subcellularLocation>
        <location evidence="4">Plastid</location>
        <location evidence="4">Cyanelle thylakoid membrane</location>
        <topology evidence="4">Peripheral membrane protein</topology>
        <orientation evidence="4">Stromal side</orientation>
    </subcellularLocation>
    <text evidence="1">In the vicinity of the photosystem I.</text>
</comment>
<comment type="similarity">
    <text evidence="4">Belongs to the ferredoxin--NADP reductase type 1 family.</text>
</comment>
<gene>
    <name type="primary">PETH</name>
</gene>
<proteinExistence type="evidence at protein level"/>
<dbReference type="EC" id="1.18.1.2"/>
<dbReference type="EMBL" id="X66372">
    <property type="protein sequence ID" value="CAA47015.1"/>
    <property type="molecule type" value="mRNA"/>
</dbReference>
<dbReference type="PIR" id="S33545">
    <property type="entry name" value="A56664"/>
</dbReference>
<dbReference type="SMR" id="Q00598"/>
<dbReference type="GO" id="GO:0034060">
    <property type="term" value="C:cyanelle stroma"/>
    <property type="evidence" value="ECO:0007669"/>
    <property type="project" value="UniProtKB-SubCell"/>
</dbReference>
<dbReference type="GO" id="GO:0033115">
    <property type="term" value="C:cyanelle thylakoid membrane"/>
    <property type="evidence" value="ECO:0007669"/>
    <property type="project" value="UniProtKB-SubCell"/>
</dbReference>
<dbReference type="GO" id="GO:0004324">
    <property type="term" value="F:ferredoxin-NADP+ reductase activity"/>
    <property type="evidence" value="ECO:0007669"/>
    <property type="project" value="UniProtKB-EC"/>
</dbReference>
<dbReference type="GO" id="GO:0015979">
    <property type="term" value="P:photosynthesis"/>
    <property type="evidence" value="ECO:0007669"/>
    <property type="project" value="UniProtKB-KW"/>
</dbReference>
<dbReference type="CDD" id="cd06208">
    <property type="entry name" value="CYPOR_like_FNR"/>
    <property type="match status" value="1"/>
</dbReference>
<dbReference type="FunFam" id="3.40.50.80:FF:000008">
    <property type="entry name" value="Ferredoxin--NADP reductase, chloroplastic"/>
    <property type="match status" value="1"/>
</dbReference>
<dbReference type="Gene3D" id="3.40.50.80">
    <property type="entry name" value="Nucleotide-binding domain of ferredoxin-NADP reductase (FNR) module"/>
    <property type="match status" value="1"/>
</dbReference>
<dbReference type="Gene3D" id="2.40.30.10">
    <property type="entry name" value="Translation factors"/>
    <property type="match status" value="1"/>
</dbReference>
<dbReference type="InterPro" id="IPR017927">
    <property type="entry name" value="FAD-bd_FR_type"/>
</dbReference>
<dbReference type="InterPro" id="IPR001709">
    <property type="entry name" value="Flavoprot_Pyr_Nucl_cyt_Rdtase"/>
</dbReference>
<dbReference type="InterPro" id="IPR015701">
    <property type="entry name" value="FNR"/>
</dbReference>
<dbReference type="InterPro" id="IPR039261">
    <property type="entry name" value="FNR_nucleotide-bd"/>
</dbReference>
<dbReference type="InterPro" id="IPR035442">
    <property type="entry name" value="FNR_plant_Cyanobacteria"/>
</dbReference>
<dbReference type="InterPro" id="IPR001433">
    <property type="entry name" value="OxRdtase_FAD/NAD-bd"/>
</dbReference>
<dbReference type="InterPro" id="IPR017938">
    <property type="entry name" value="Riboflavin_synthase-like_b-brl"/>
</dbReference>
<dbReference type="PANTHER" id="PTHR43314">
    <property type="match status" value="1"/>
</dbReference>
<dbReference type="Pfam" id="PF00175">
    <property type="entry name" value="NAD_binding_1"/>
    <property type="match status" value="1"/>
</dbReference>
<dbReference type="PIRSF" id="PIRSF501178">
    <property type="entry name" value="FNR-PetH"/>
    <property type="match status" value="1"/>
</dbReference>
<dbReference type="PIRSF" id="PIRSF000361">
    <property type="entry name" value="Frd-NADP+_RD"/>
    <property type="match status" value="1"/>
</dbReference>
<dbReference type="PRINTS" id="PR00371">
    <property type="entry name" value="FPNCR"/>
</dbReference>
<dbReference type="SUPFAM" id="SSF52343">
    <property type="entry name" value="Ferredoxin reductase-like, C-terminal NADP-linked domain"/>
    <property type="match status" value="1"/>
</dbReference>
<dbReference type="SUPFAM" id="SSF63380">
    <property type="entry name" value="Riboflavin synthase domain-like"/>
    <property type="match status" value="1"/>
</dbReference>
<dbReference type="PROSITE" id="PS51384">
    <property type="entry name" value="FAD_FR"/>
    <property type="match status" value="1"/>
</dbReference>
<name>FENR_CYAPA</name>
<feature type="transit peptide" description="Cyanelle" evidence="3">
    <location>
        <begin position="1"/>
        <end position="65"/>
    </location>
</feature>
<feature type="chain" id="PRO_0000019418" description="Ferredoxin--NADP reductase, cyanelle">
    <location>
        <begin position="66"/>
        <end position="363"/>
    </location>
</feature>
<feature type="domain" description="FAD-binding FR-type" evidence="2">
    <location>
        <begin position="84"/>
        <end position="206"/>
    </location>
</feature>
<feature type="binding site" evidence="1">
    <location>
        <begin position="142"/>
        <end position="145"/>
    </location>
    <ligand>
        <name>FAD</name>
        <dbReference type="ChEBI" id="CHEBI:57692"/>
    </ligand>
</feature>
<feature type="binding site" evidence="1">
    <location>
        <position position="145"/>
    </location>
    <ligand>
        <name>NADP(+)</name>
        <dbReference type="ChEBI" id="CHEBI:58349"/>
    </ligand>
</feature>
<feature type="binding site" evidence="1">
    <location>
        <begin position="163"/>
        <end position="165"/>
    </location>
    <ligand>
        <name>FAD</name>
        <dbReference type="ChEBI" id="CHEBI:57692"/>
    </ligand>
</feature>
<feature type="binding site" evidence="1">
    <location>
        <position position="165"/>
    </location>
    <ligand>
        <name>NADP(+)</name>
        <dbReference type="ChEBI" id="CHEBI:58349"/>
    </ligand>
</feature>
<feature type="binding site" evidence="1">
    <location>
        <position position="169"/>
    </location>
    <ligand>
        <name>FAD</name>
        <dbReference type="ChEBI" id="CHEBI:57692"/>
    </ligand>
</feature>
<feature type="binding site" evidence="1">
    <location>
        <begin position="180"/>
        <end position="182"/>
    </location>
    <ligand>
        <name>FAD</name>
        <dbReference type="ChEBI" id="CHEBI:57692"/>
    </ligand>
</feature>
<feature type="binding site" evidence="1">
    <location>
        <position position="221"/>
    </location>
    <ligand>
        <name>FAD</name>
        <dbReference type="ChEBI" id="CHEBI:57692"/>
    </ligand>
</feature>
<feature type="binding site" evidence="1">
    <location>
        <position position="221"/>
    </location>
    <ligand>
        <name>NADP(+)</name>
        <dbReference type="ChEBI" id="CHEBI:58349"/>
    </ligand>
</feature>
<feature type="binding site" evidence="1">
    <location>
        <begin position="253"/>
        <end position="254"/>
    </location>
    <ligand>
        <name>NADP(+)</name>
        <dbReference type="ChEBI" id="CHEBI:58349"/>
    </ligand>
</feature>
<feature type="binding site" evidence="1">
    <location>
        <begin position="283"/>
        <end position="284"/>
    </location>
    <ligand>
        <name>NADP(+)</name>
        <dbReference type="ChEBI" id="CHEBI:58349"/>
    </ligand>
</feature>
<feature type="binding site" evidence="1">
    <location>
        <position position="293"/>
    </location>
    <ligand>
        <name>NADP(+)</name>
        <dbReference type="ChEBI" id="CHEBI:58349"/>
    </ligand>
</feature>
<feature type="binding site" evidence="1">
    <location>
        <begin position="322"/>
        <end position="323"/>
    </location>
    <ligand>
        <name>NADP(+)</name>
        <dbReference type="ChEBI" id="CHEBI:58349"/>
    </ligand>
</feature>
<feature type="binding site" evidence="1">
    <location>
        <position position="361"/>
    </location>
    <ligand>
        <name>NADP(+)</name>
        <dbReference type="ChEBI" id="CHEBI:58349"/>
    </ligand>
</feature>
<protein>
    <recommendedName>
        <fullName>Ferredoxin--NADP reductase, cyanelle</fullName>
        <shortName>FNR</shortName>
        <ecNumber>1.18.1.2</ecNumber>
    </recommendedName>
</protein>
<reference key="1">
    <citation type="journal article" date="1993" name="Plant Mol. Biol.">
        <title>Sequence analysis of pre-ferredoxin-NADP(+)-reductase cDNA from Cyanophora paradoxa specifying a precursor for a nucleus-encoded cyanelle polypeptide.</title>
        <authorList>
            <person name="Jakowitsch J."/>
            <person name="Bayer M.G."/>
            <person name="Maier T.L."/>
            <person name="Luettke A."/>
            <person name="Gebhart U.B."/>
            <person name="Brandtner M."/>
            <person name="Hamilton B."/>
            <person name="Neumann-Spallart C."/>
            <person name="Michalowski C.B."/>
            <person name="Bohnert H.J."/>
            <person name="Schenk H.E.A."/>
            <person name="Loeffelhardt W."/>
        </authorList>
    </citation>
    <scope>NUCLEOTIDE SEQUENCE [MRNA]</scope>
    <scope>PROTEIN SEQUENCE OF 66-90</scope>
    <source>
        <strain>UTEX LB 555 / Pringsheim</strain>
    </source>
</reference>
<keyword id="KW-0194">Cyanelle</keyword>
<keyword id="KW-0903">Direct protein sequencing</keyword>
<keyword id="KW-0249">Electron transport</keyword>
<keyword id="KW-0274">FAD</keyword>
<keyword id="KW-0285">Flavoprotein</keyword>
<keyword id="KW-0472">Membrane</keyword>
<keyword id="KW-0521">NADP</keyword>
<keyword id="KW-0560">Oxidoreductase</keyword>
<keyword id="KW-0602">Photosynthesis</keyword>
<keyword id="KW-0934">Plastid</keyword>
<keyword id="KW-0793">Thylakoid</keyword>
<keyword id="KW-0809">Transit peptide</keyword>
<keyword id="KW-0813">Transport</keyword>